<sequence length="492" mass="55223">MIPVVALVGRPNVGKSTLFNRLTRTRDALVADFPGLTRDRKYGRAEVEGREFICIDTGGIDGTEEGVETRMAEQSLLAIEEADVVLFMVDARAGLMPADIAIAKHLRSREKPTFLVANKTDGIDVDQAMADFWSLGLGDIYPIAASHGRGVTSLLEQALLPWVDEVNPQEEVDEDAEYWAKFEAEQNGEAEEEPEDDFNPQDLPIKLAIVGRPNVGKSTLTNRILGEDRVVVYDMPGTTRDSIYIPMQRDEREYVLIDTAGVRKRGKITDVVEKFSVIKTLQAIEDANVVLLVIDAREGISDQDLSLLGFILNSGRSLVIVVNKWDGLSQEVKEQVKETLDYRLGFIDFARVHFISALHGSGVGNLFESVREAYDSATRRVSTAMLTRIMNMAAEDHQPPLVRGRRVKLKYAHAGGYNPPIVVIHGNQVKDLPDSYKRYLMNYFRKSLDVMGTPIRIQFKEGENPFANKRNTLTPNQMRKRKRLIKHIKKSK</sequence>
<comment type="function">
    <text evidence="1">GTPase that plays an essential role in the late steps of ribosome biogenesis.</text>
</comment>
<comment type="subunit">
    <text evidence="1">Associates with the 50S ribosomal subunit.</text>
</comment>
<comment type="similarity">
    <text evidence="1">Belongs to the TRAFAC class TrmE-Era-EngA-EngB-Septin-like GTPase superfamily. EngA (Der) GTPase family.</text>
</comment>
<organism>
    <name type="scientific">Klebsiella pneumoniae subsp. pneumoniae (strain ATCC 700721 / MGH 78578)</name>
    <dbReference type="NCBI Taxonomy" id="272620"/>
    <lineage>
        <taxon>Bacteria</taxon>
        <taxon>Pseudomonadati</taxon>
        <taxon>Pseudomonadota</taxon>
        <taxon>Gammaproteobacteria</taxon>
        <taxon>Enterobacterales</taxon>
        <taxon>Enterobacteriaceae</taxon>
        <taxon>Klebsiella/Raoultella group</taxon>
        <taxon>Klebsiella</taxon>
        <taxon>Klebsiella pneumoniae complex</taxon>
    </lineage>
</organism>
<name>DER_KLEP7</name>
<evidence type="ECO:0000255" key="1">
    <source>
        <dbReference type="HAMAP-Rule" id="MF_00195"/>
    </source>
</evidence>
<accession>A6TCD0</accession>
<feature type="chain" id="PRO_1000011643" description="GTPase Der">
    <location>
        <begin position="1"/>
        <end position="492"/>
    </location>
</feature>
<feature type="domain" description="EngA-type G 1">
    <location>
        <begin position="3"/>
        <end position="166"/>
    </location>
</feature>
<feature type="domain" description="EngA-type G 2">
    <location>
        <begin position="205"/>
        <end position="378"/>
    </location>
</feature>
<feature type="domain" description="KH-like" evidence="1">
    <location>
        <begin position="379"/>
        <end position="463"/>
    </location>
</feature>
<feature type="binding site" evidence="1">
    <location>
        <begin position="9"/>
        <end position="16"/>
    </location>
    <ligand>
        <name>GTP</name>
        <dbReference type="ChEBI" id="CHEBI:37565"/>
        <label>1</label>
    </ligand>
</feature>
<feature type="binding site" evidence="1">
    <location>
        <begin position="56"/>
        <end position="60"/>
    </location>
    <ligand>
        <name>GTP</name>
        <dbReference type="ChEBI" id="CHEBI:37565"/>
        <label>1</label>
    </ligand>
</feature>
<feature type="binding site" evidence="1">
    <location>
        <begin position="118"/>
        <end position="121"/>
    </location>
    <ligand>
        <name>GTP</name>
        <dbReference type="ChEBI" id="CHEBI:37565"/>
        <label>1</label>
    </ligand>
</feature>
<feature type="binding site" evidence="1">
    <location>
        <begin position="211"/>
        <end position="218"/>
    </location>
    <ligand>
        <name>GTP</name>
        <dbReference type="ChEBI" id="CHEBI:37565"/>
        <label>2</label>
    </ligand>
</feature>
<feature type="binding site" evidence="1">
    <location>
        <begin position="258"/>
        <end position="262"/>
    </location>
    <ligand>
        <name>GTP</name>
        <dbReference type="ChEBI" id="CHEBI:37565"/>
        <label>2</label>
    </ligand>
</feature>
<feature type="binding site" evidence="1">
    <location>
        <begin position="323"/>
        <end position="326"/>
    </location>
    <ligand>
        <name>GTP</name>
        <dbReference type="ChEBI" id="CHEBI:37565"/>
        <label>2</label>
    </ligand>
</feature>
<reference key="1">
    <citation type="submission" date="2006-09" db="EMBL/GenBank/DDBJ databases">
        <authorList>
            <consortium name="The Klebsiella pneumonia Genome Sequencing Project"/>
            <person name="McClelland M."/>
            <person name="Sanderson E.K."/>
            <person name="Spieth J."/>
            <person name="Clifton W.S."/>
            <person name="Latreille P."/>
            <person name="Sabo A."/>
            <person name="Pepin K."/>
            <person name="Bhonagiri V."/>
            <person name="Porwollik S."/>
            <person name="Ali J."/>
            <person name="Wilson R.K."/>
        </authorList>
    </citation>
    <scope>NUCLEOTIDE SEQUENCE [LARGE SCALE GENOMIC DNA]</scope>
    <source>
        <strain>ATCC 700721 / MGH 78578</strain>
    </source>
</reference>
<proteinExistence type="inferred from homology"/>
<keyword id="KW-0342">GTP-binding</keyword>
<keyword id="KW-0547">Nucleotide-binding</keyword>
<keyword id="KW-0677">Repeat</keyword>
<keyword id="KW-0690">Ribosome biogenesis</keyword>
<dbReference type="EMBL" id="CP000647">
    <property type="protein sequence ID" value="ABR78251.1"/>
    <property type="molecule type" value="Genomic_DNA"/>
</dbReference>
<dbReference type="RefSeq" id="WP_004144309.1">
    <property type="nucleotide sequence ID" value="NC_009648.1"/>
</dbReference>
<dbReference type="SMR" id="A6TCD0"/>
<dbReference type="STRING" id="272620.KPN_02841"/>
<dbReference type="jPOST" id="A6TCD0"/>
<dbReference type="PaxDb" id="272620-KPN_02841"/>
<dbReference type="EnsemblBacteria" id="ABR78251">
    <property type="protein sequence ID" value="ABR78251"/>
    <property type="gene ID" value="KPN_02841"/>
</dbReference>
<dbReference type="GeneID" id="93250137"/>
<dbReference type="KEGG" id="kpn:KPN_02841"/>
<dbReference type="HOGENOM" id="CLU_016077_6_2_6"/>
<dbReference type="Proteomes" id="UP000000265">
    <property type="component" value="Chromosome"/>
</dbReference>
<dbReference type="GO" id="GO:0005525">
    <property type="term" value="F:GTP binding"/>
    <property type="evidence" value="ECO:0007669"/>
    <property type="project" value="UniProtKB-UniRule"/>
</dbReference>
<dbReference type="GO" id="GO:0043022">
    <property type="term" value="F:ribosome binding"/>
    <property type="evidence" value="ECO:0007669"/>
    <property type="project" value="TreeGrafter"/>
</dbReference>
<dbReference type="GO" id="GO:0042254">
    <property type="term" value="P:ribosome biogenesis"/>
    <property type="evidence" value="ECO:0007669"/>
    <property type="project" value="UniProtKB-KW"/>
</dbReference>
<dbReference type="CDD" id="cd01894">
    <property type="entry name" value="EngA1"/>
    <property type="match status" value="1"/>
</dbReference>
<dbReference type="CDD" id="cd01895">
    <property type="entry name" value="EngA2"/>
    <property type="match status" value="1"/>
</dbReference>
<dbReference type="FunFam" id="3.30.300.20:FF:000004">
    <property type="entry name" value="GTPase Der"/>
    <property type="match status" value="1"/>
</dbReference>
<dbReference type="FunFam" id="3.40.50.300:FF:000040">
    <property type="entry name" value="GTPase Der"/>
    <property type="match status" value="1"/>
</dbReference>
<dbReference type="FunFam" id="3.40.50.300:FF:000057">
    <property type="entry name" value="GTPase Der"/>
    <property type="match status" value="1"/>
</dbReference>
<dbReference type="Gene3D" id="3.30.300.20">
    <property type="match status" value="1"/>
</dbReference>
<dbReference type="Gene3D" id="3.40.50.300">
    <property type="entry name" value="P-loop containing nucleotide triphosphate hydrolases"/>
    <property type="match status" value="2"/>
</dbReference>
<dbReference type="HAMAP" id="MF_00195">
    <property type="entry name" value="GTPase_Der"/>
    <property type="match status" value="1"/>
</dbReference>
<dbReference type="InterPro" id="IPR031166">
    <property type="entry name" value="G_ENGA"/>
</dbReference>
<dbReference type="InterPro" id="IPR006073">
    <property type="entry name" value="GTP-bd"/>
</dbReference>
<dbReference type="InterPro" id="IPR016484">
    <property type="entry name" value="GTPase_Der"/>
</dbReference>
<dbReference type="InterPro" id="IPR032859">
    <property type="entry name" value="KH_dom-like"/>
</dbReference>
<dbReference type="InterPro" id="IPR015946">
    <property type="entry name" value="KH_dom-like_a/b"/>
</dbReference>
<dbReference type="InterPro" id="IPR027417">
    <property type="entry name" value="P-loop_NTPase"/>
</dbReference>
<dbReference type="InterPro" id="IPR005225">
    <property type="entry name" value="Small_GTP-bd"/>
</dbReference>
<dbReference type="NCBIfam" id="TIGR03594">
    <property type="entry name" value="GTPase_EngA"/>
    <property type="match status" value="1"/>
</dbReference>
<dbReference type="NCBIfam" id="TIGR00231">
    <property type="entry name" value="small_GTP"/>
    <property type="match status" value="2"/>
</dbReference>
<dbReference type="PANTHER" id="PTHR43834">
    <property type="entry name" value="GTPASE DER"/>
    <property type="match status" value="1"/>
</dbReference>
<dbReference type="PANTHER" id="PTHR43834:SF6">
    <property type="entry name" value="GTPASE DER"/>
    <property type="match status" value="1"/>
</dbReference>
<dbReference type="Pfam" id="PF14714">
    <property type="entry name" value="KH_dom-like"/>
    <property type="match status" value="1"/>
</dbReference>
<dbReference type="Pfam" id="PF01926">
    <property type="entry name" value="MMR_HSR1"/>
    <property type="match status" value="2"/>
</dbReference>
<dbReference type="PIRSF" id="PIRSF006485">
    <property type="entry name" value="GTP-binding_EngA"/>
    <property type="match status" value="1"/>
</dbReference>
<dbReference type="PRINTS" id="PR00326">
    <property type="entry name" value="GTP1OBG"/>
</dbReference>
<dbReference type="SUPFAM" id="SSF52540">
    <property type="entry name" value="P-loop containing nucleoside triphosphate hydrolases"/>
    <property type="match status" value="2"/>
</dbReference>
<dbReference type="PROSITE" id="PS51712">
    <property type="entry name" value="G_ENGA"/>
    <property type="match status" value="2"/>
</dbReference>
<protein>
    <recommendedName>
        <fullName evidence="1">GTPase Der</fullName>
    </recommendedName>
    <alternativeName>
        <fullName evidence="1">GTP-binding protein EngA</fullName>
    </alternativeName>
</protein>
<gene>
    <name evidence="1" type="primary">der</name>
    <name type="synonym">engA</name>
    <name type="ordered locus">KPN78578_27900</name>
    <name type="ORF">KPN_02841</name>
</gene>